<protein>
    <recommendedName>
        <fullName evidence="1">Uroporphyrinogen decarboxylase</fullName>
        <shortName evidence="1">UPD</shortName>
        <shortName evidence="1">URO-D</shortName>
        <ecNumber evidence="1">4.1.1.37</ecNumber>
    </recommendedName>
</protein>
<dbReference type="EC" id="4.1.1.37" evidence="1"/>
<dbReference type="EMBL" id="CP001108">
    <property type="protein sequence ID" value="ACF45308.1"/>
    <property type="molecule type" value="Genomic_DNA"/>
</dbReference>
<dbReference type="RefSeq" id="WP_012504845.1">
    <property type="nucleotide sequence ID" value="NC_011059.1"/>
</dbReference>
<dbReference type="SMR" id="B4S3W2"/>
<dbReference type="STRING" id="290512.Paes_0251"/>
<dbReference type="KEGG" id="paa:Paes_0251"/>
<dbReference type="eggNOG" id="COG0407">
    <property type="taxonomic scope" value="Bacteria"/>
</dbReference>
<dbReference type="HOGENOM" id="CLU_040933_0_0_10"/>
<dbReference type="UniPathway" id="UPA00251">
    <property type="reaction ID" value="UER00321"/>
</dbReference>
<dbReference type="Proteomes" id="UP000002725">
    <property type="component" value="Chromosome"/>
</dbReference>
<dbReference type="GO" id="GO:0005829">
    <property type="term" value="C:cytosol"/>
    <property type="evidence" value="ECO:0007669"/>
    <property type="project" value="TreeGrafter"/>
</dbReference>
<dbReference type="GO" id="GO:0004853">
    <property type="term" value="F:uroporphyrinogen decarboxylase activity"/>
    <property type="evidence" value="ECO:0007669"/>
    <property type="project" value="UniProtKB-UniRule"/>
</dbReference>
<dbReference type="GO" id="GO:0006782">
    <property type="term" value="P:protoporphyrinogen IX biosynthetic process"/>
    <property type="evidence" value="ECO:0007669"/>
    <property type="project" value="UniProtKB-UniRule"/>
</dbReference>
<dbReference type="CDD" id="cd00717">
    <property type="entry name" value="URO-D"/>
    <property type="match status" value="1"/>
</dbReference>
<dbReference type="FunFam" id="3.20.20.210:FF:000001">
    <property type="entry name" value="Uroporphyrinogen decarboxylase"/>
    <property type="match status" value="1"/>
</dbReference>
<dbReference type="Gene3D" id="3.20.20.210">
    <property type="match status" value="1"/>
</dbReference>
<dbReference type="HAMAP" id="MF_00218">
    <property type="entry name" value="URO_D"/>
    <property type="match status" value="1"/>
</dbReference>
<dbReference type="InterPro" id="IPR038071">
    <property type="entry name" value="UROD/MetE-like_sf"/>
</dbReference>
<dbReference type="InterPro" id="IPR006361">
    <property type="entry name" value="Uroporphyrinogen_deCO2ase_HemE"/>
</dbReference>
<dbReference type="InterPro" id="IPR000257">
    <property type="entry name" value="Uroporphyrinogen_deCOase"/>
</dbReference>
<dbReference type="NCBIfam" id="TIGR01464">
    <property type="entry name" value="hemE"/>
    <property type="match status" value="1"/>
</dbReference>
<dbReference type="PANTHER" id="PTHR21091">
    <property type="entry name" value="METHYLTETRAHYDROFOLATE:HOMOCYSTEINE METHYLTRANSFERASE RELATED"/>
    <property type="match status" value="1"/>
</dbReference>
<dbReference type="PANTHER" id="PTHR21091:SF169">
    <property type="entry name" value="UROPORPHYRINOGEN DECARBOXYLASE"/>
    <property type="match status" value="1"/>
</dbReference>
<dbReference type="Pfam" id="PF01208">
    <property type="entry name" value="URO-D"/>
    <property type="match status" value="1"/>
</dbReference>
<dbReference type="SUPFAM" id="SSF51726">
    <property type="entry name" value="UROD/MetE-like"/>
    <property type="match status" value="1"/>
</dbReference>
<dbReference type="PROSITE" id="PS00906">
    <property type="entry name" value="UROD_1"/>
    <property type="match status" value="1"/>
</dbReference>
<dbReference type="PROSITE" id="PS00907">
    <property type="entry name" value="UROD_2"/>
    <property type="match status" value="1"/>
</dbReference>
<evidence type="ECO:0000255" key="1">
    <source>
        <dbReference type="HAMAP-Rule" id="MF_00218"/>
    </source>
</evidence>
<gene>
    <name evidence="1" type="primary">hemE</name>
    <name type="ordered locus">Paes_0251</name>
</gene>
<sequence>MLKNDLFLRALKRQPVPRTPIWVMRQAGRYLPEYRAIREKTDFLTLCKTPELAAEVTIQPVDIIGVDAAIIFSDILVVNEAMGMDVQIIETKGIKLTPPIRSQVDIDRLIIPDIEEKLGYVMDAIRLTKKELDNRVPLIGFSGAAWTLFTYAVEGGGSKNYAFAKKMMYREPQMAHMLLSKISQVITEYLLMQVEAGADALQIFDSWASALSEDDYREFALPYIKESVQAIKTKYPDIPVIVFSKDCNTILSDIADTGCDAMGLGWNMDIAKARKELQDRVCIQGNMDPTVLYGTHDKIKAEAAKILKQFGQHTAESGHVFNLGHGILPDVDPANLKCLVDFVKEESPKYH</sequence>
<accession>B4S3W2</accession>
<organism>
    <name type="scientific">Prosthecochloris aestuarii (strain DSM 271 / SK 413)</name>
    <dbReference type="NCBI Taxonomy" id="290512"/>
    <lineage>
        <taxon>Bacteria</taxon>
        <taxon>Pseudomonadati</taxon>
        <taxon>Chlorobiota</taxon>
        <taxon>Chlorobiia</taxon>
        <taxon>Chlorobiales</taxon>
        <taxon>Chlorobiaceae</taxon>
        <taxon>Prosthecochloris</taxon>
    </lineage>
</organism>
<comment type="function">
    <text evidence="1">Catalyzes the decarboxylation of four acetate groups of uroporphyrinogen-III to yield coproporphyrinogen-III.</text>
</comment>
<comment type="catalytic activity">
    <reaction evidence="1">
        <text>uroporphyrinogen III + 4 H(+) = coproporphyrinogen III + 4 CO2</text>
        <dbReference type="Rhea" id="RHEA:19865"/>
        <dbReference type="ChEBI" id="CHEBI:15378"/>
        <dbReference type="ChEBI" id="CHEBI:16526"/>
        <dbReference type="ChEBI" id="CHEBI:57308"/>
        <dbReference type="ChEBI" id="CHEBI:57309"/>
        <dbReference type="EC" id="4.1.1.37"/>
    </reaction>
</comment>
<comment type="pathway">
    <text evidence="1">Porphyrin-containing compound metabolism; protoporphyrin-IX biosynthesis; coproporphyrinogen-III from 5-aminolevulinate: step 4/4.</text>
</comment>
<comment type="subunit">
    <text evidence="1">Homodimer.</text>
</comment>
<comment type="subcellular location">
    <subcellularLocation>
        <location evidence="1">Cytoplasm</location>
    </subcellularLocation>
</comment>
<comment type="similarity">
    <text evidence="1">Belongs to the uroporphyrinogen decarboxylase family.</text>
</comment>
<keyword id="KW-0963">Cytoplasm</keyword>
<keyword id="KW-0210">Decarboxylase</keyword>
<keyword id="KW-0456">Lyase</keyword>
<keyword id="KW-0627">Porphyrin biosynthesis</keyword>
<feature type="chain" id="PRO_1000100006" description="Uroporphyrinogen decarboxylase">
    <location>
        <begin position="1"/>
        <end position="351"/>
    </location>
</feature>
<feature type="binding site" evidence="1">
    <location>
        <begin position="25"/>
        <end position="29"/>
    </location>
    <ligand>
        <name>substrate</name>
    </ligand>
</feature>
<feature type="binding site" evidence="1">
    <location>
        <position position="74"/>
    </location>
    <ligand>
        <name>substrate</name>
    </ligand>
</feature>
<feature type="binding site" evidence="1">
    <location>
        <position position="151"/>
    </location>
    <ligand>
        <name>substrate</name>
    </ligand>
</feature>
<feature type="binding site" evidence="1">
    <location>
        <position position="206"/>
    </location>
    <ligand>
        <name>substrate</name>
    </ligand>
</feature>
<feature type="binding site" evidence="1">
    <location>
        <position position="325"/>
    </location>
    <ligand>
        <name>substrate</name>
    </ligand>
</feature>
<feature type="site" description="Transition state stabilizer" evidence="1">
    <location>
        <position position="74"/>
    </location>
</feature>
<reference key="1">
    <citation type="submission" date="2008-06" db="EMBL/GenBank/DDBJ databases">
        <title>Complete sequence of chromosome of Prosthecochloris aestuarii DSM 271.</title>
        <authorList>
            <consortium name="US DOE Joint Genome Institute"/>
            <person name="Lucas S."/>
            <person name="Copeland A."/>
            <person name="Lapidus A."/>
            <person name="Glavina del Rio T."/>
            <person name="Dalin E."/>
            <person name="Tice H."/>
            <person name="Bruce D."/>
            <person name="Goodwin L."/>
            <person name="Pitluck S."/>
            <person name="Schmutz J."/>
            <person name="Larimer F."/>
            <person name="Land M."/>
            <person name="Hauser L."/>
            <person name="Kyrpides N."/>
            <person name="Anderson I."/>
            <person name="Liu Z."/>
            <person name="Li T."/>
            <person name="Zhao F."/>
            <person name="Overmann J."/>
            <person name="Bryant D.A."/>
            <person name="Richardson P."/>
        </authorList>
    </citation>
    <scope>NUCLEOTIDE SEQUENCE [LARGE SCALE GENOMIC DNA]</scope>
    <source>
        <strain>DSM 271 / SK 413</strain>
    </source>
</reference>
<proteinExistence type="inferred from homology"/>
<name>DCUP_PROA2</name>